<keyword id="KW-0067">ATP-binding</keyword>
<keyword id="KW-0997">Cell inner membrane</keyword>
<keyword id="KW-1003">Cell membrane</keyword>
<keyword id="KW-0472">Membrane</keyword>
<keyword id="KW-0547">Nucleotide-binding</keyword>
<keyword id="KW-1185">Reference proteome</keyword>
<keyword id="KW-1278">Translocase</keyword>
<keyword id="KW-0813">Transport</keyword>
<gene>
    <name evidence="1" type="primary">potA</name>
    <name type="ordered locus">HCH_02209</name>
</gene>
<sequence length="365" mass="41296">MSKPPILTLADITKRFDTQEVLSGFNLSIEDGEFFTILGPSGCGKTTVLRLIAGFEGADEGRIMLNGQDVSKLSAEKRPVNTVFQSYALFPHMTVFDNVAFGLKMAKVSKPEIAERVKEALATVRLSDFATRKPHQLSGGQKQRVAIARAVVNRPKVLLLDESLSALDYKLRQQMQMELKQLQRKLGITFIYVTHDQEEALSMSDRVLVMHNGQAQQVGTPREIYECPNNLFVASFIGEINVFNAEIVESLSDYRYLAAMDGFKREIHADRRFEAGDKVHVLLRPEDLRIEYLEDAPDRPGFSGQVLERNYTGQTLDSQIQLQSGQTIMASEFFDEDDPDFDYSINQKVWVDWVHGWEHVIKAES</sequence>
<name>POTA_HAHCH</name>
<accession>Q2SJY7</accession>
<reference key="1">
    <citation type="journal article" date="2005" name="Nucleic Acids Res.">
        <title>Genomic blueprint of Hahella chejuensis, a marine microbe producing an algicidal agent.</title>
        <authorList>
            <person name="Jeong H."/>
            <person name="Yim J.H."/>
            <person name="Lee C."/>
            <person name="Choi S.-H."/>
            <person name="Park Y.K."/>
            <person name="Yoon S.H."/>
            <person name="Hur C.-G."/>
            <person name="Kang H.-Y."/>
            <person name="Kim D."/>
            <person name="Lee H.H."/>
            <person name="Park K.H."/>
            <person name="Park S.-H."/>
            <person name="Park H.-S."/>
            <person name="Lee H.K."/>
            <person name="Oh T.K."/>
            <person name="Kim J.F."/>
        </authorList>
    </citation>
    <scope>NUCLEOTIDE SEQUENCE [LARGE SCALE GENOMIC DNA]</scope>
    <source>
        <strain>KCTC 2396</strain>
    </source>
</reference>
<dbReference type="EC" id="7.6.2.11" evidence="1"/>
<dbReference type="EMBL" id="CP000155">
    <property type="protein sequence ID" value="ABC29037.1"/>
    <property type="molecule type" value="Genomic_DNA"/>
</dbReference>
<dbReference type="RefSeq" id="WP_011396106.1">
    <property type="nucleotide sequence ID" value="NC_007645.1"/>
</dbReference>
<dbReference type="SMR" id="Q2SJY7"/>
<dbReference type="STRING" id="349521.HCH_02209"/>
<dbReference type="KEGG" id="hch:HCH_02209"/>
<dbReference type="eggNOG" id="COG3842">
    <property type="taxonomic scope" value="Bacteria"/>
</dbReference>
<dbReference type="HOGENOM" id="CLU_000604_1_1_6"/>
<dbReference type="OrthoDB" id="9802264at2"/>
<dbReference type="Proteomes" id="UP000000238">
    <property type="component" value="Chromosome"/>
</dbReference>
<dbReference type="GO" id="GO:0043190">
    <property type="term" value="C:ATP-binding cassette (ABC) transporter complex"/>
    <property type="evidence" value="ECO:0007669"/>
    <property type="project" value="InterPro"/>
</dbReference>
<dbReference type="GO" id="GO:0015594">
    <property type="term" value="F:ABC-type putrescine transporter activity"/>
    <property type="evidence" value="ECO:0007669"/>
    <property type="project" value="InterPro"/>
</dbReference>
<dbReference type="GO" id="GO:0005524">
    <property type="term" value="F:ATP binding"/>
    <property type="evidence" value="ECO:0007669"/>
    <property type="project" value="UniProtKB-KW"/>
</dbReference>
<dbReference type="GO" id="GO:0016887">
    <property type="term" value="F:ATP hydrolysis activity"/>
    <property type="evidence" value="ECO:0007669"/>
    <property type="project" value="InterPro"/>
</dbReference>
<dbReference type="CDD" id="cd03300">
    <property type="entry name" value="ABC_PotA_N"/>
    <property type="match status" value="1"/>
</dbReference>
<dbReference type="FunFam" id="3.40.50.300:FF:000133">
    <property type="entry name" value="Spermidine/putrescine import ATP-binding protein PotA"/>
    <property type="match status" value="1"/>
</dbReference>
<dbReference type="Gene3D" id="2.40.50.100">
    <property type="match status" value="1"/>
</dbReference>
<dbReference type="Gene3D" id="3.40.50.300">
    <property type="entry name" value="P-loop containing nucleotide triphosphate hydrolases"/>
    <property type="match status" value="1"/>
</dbReference>
<dbReference type="InterPro" id="IPR003593">
    <property type="entry name" value="AAA+_ATPase"/>
</dbReference>
<dbReference type="InterPro" id="IPR050093">
    <property type="entry name" value="ABC_SmlMolc_Importer"/>
</dbReference>
<dbReference type="InterPro" id="IPR003439">
    <property type="entry name" value="ABC_transporter-like_ATP-bd"/>
</dbReference>
<dbReference type="InterPro" id="IPR017871">
    <property type="entry name" value="ABC_transporter-like_CS"/>
</dbReference>
<dbReference type="InterPro" id="IPR008995">
    <property type="entry name" value="Mo/tungstate-bd_C_term_dom"/>
</dbReference>
<dbReference type="InterPro" id="IPR027417">
    <property type="entry name" value="P-loop_NTPase"/>
</dbReference>
<dbReference type="InterPro" id="IPR005893">
    <property type="entry name" value="PotA-like"/>
</dbReference>
<dbReference type="InterPro" id="IPR017879">
    <property type="entry name" value="PotA_ATP-bd"/>
</dbReference>
<dbReference type="InterPro" id="IPR013611">
    <property type="entry name" value="Transp-assoc_OB_typ2"/>
</dbReference>
<dbReference type="NCBIfam" id="TIGR01187">
    <property type="entry name" value="potA"/>
    <property type="match status" value="1"/>
</dbReference>
<dbReference type="NCBIfam" id="NF006987">
    <property type="entry name" value="PRK09452.1"/>
    <property type="match status" value="1"/>
</dbReference>
<dbReference type="PANTHER" id="PTHR42781">
    <property type="entry name" value="SPERMIDINE/PUTRESCINE IMPORT ATP-BINDING PROTEIN POTA"/>
    <property type="match status" value="1"/>
</dbReference>
<dbReference type="PANTHER" id="PTHR42781:SF4">
    <property type="entry name" value="SPERMIDINE_PUTRESCINE IMPORT ATP-BINDING PROTEIN POTA"/>
    <property type="match status" value="1"/>
</dbReference>
<dbReference type="Pfam" id="PF00005">
    <property type="entry name" value="ABC_tran"/>
    <property type="match status" value="1"/>
</dbReference>
<dbReference type="Pfam" id="PF08402">
    <property type="entry name" value="TOBE_2"/>
    <property type="match status" value="1"/>
</dbReference>
<dbReference type="SMART" id="SM00382">
    <property type="entry name" value="AAA"/>
    <property type="match status" value="1"/>
</dbReference>
<dbReference type="SUPFAM" id="SSF50331">
    <property type="entry name" value="MOP-like"/>
    <property type="match status" value="1"/>
</dbReference>
<dbReference type="SUPFAM" id="SSF52540">
    <property type="entry name" value="P-loop containing nucleoside triphosphate hydrolases"/>
    <property type="match status" value="1"/>
</dbReference>
<dbReference type="PROSITE" id="PS00211">
    <property type="entry name" value="ABC_TRANSPORTER_1"/>
    <property type="match status" value="1"/>
</dbReference>
<dbReference type="PROSITE" id="PS50893">
    <property type="entry name" value="ABC_TRANSPORTER_2"/>
    <property type="match status" value="1"/>
</dbReference>
<dbReference type="PROSITE" id="PS51305">
    <property type="entry name" value="POTA"/>
    <property type="match status" value="1"/>
</dbReference>
<comment type="function">
    <text evidence="1">Part of the ABC transporter complex PotABCD involved in spermidine/putrescine import. Responsible for energy coupling to the transport system.</text>
</comment>
<comment type="catalytic activity">
    <reaction evidence="1">
        <text>ATP + H2O + polyamine-[polyamine-binding protein]Side 1 = ADP + phosphate + polyamineSide 2 + [polyamine-binding protein]Side 1.</text>
        <dbReference type="EC" id="7.6.2.11"/>
    </reaction>
</comment>
<comment type="subunit">
    <text evidence="1">The complex is composed of two ATP-binding proteins (PotA), two transmembrane proteins (PotB and PotC) and a solute-binding protein (PotD).</text>
</comment>
<comment type="subcellular location">
    <subcellularLocation>
        <location evidence="1">Cell inner membrane</location>
        <topology evidence="1">Peripheral membrane protein</topology>
    </subcellularLocation>
</comment>
<comment type="similarity">
    <text evidence="1">Belongs to the ABC transporter superfamily. Spermidine/putrescine importer (TC 3.A.1.11.1) family.</text>
</comment>
<protein>
    <recommendedName>
        <fullName evidence="1">Spermidine/putrescine import ATP-binding protein PotA</fullName>
        <ecNumber evidence="1">7.6.2.11</ecNumber>
    </recommendedName>
</protein>
<feature type="chain" id="PRO_0000286225" description="Spermidine/putrescine import ATP-binding protein PotA">
    <location>
        <begin position="1"/>
        <end position="365"/>
    </location>
</feature>
<feature type="domain" description="ABC transporter" evidence="1">
    <location>
        <begin position="7"/>
        <end position="237"/>
    </location>
</feature>
<feature type="binding site" evidence="1">
    <location>
        <begin position="39"/>
        <end position="46"/>
    </location>
    <ligand>
        <name>ATP</name>
        <dbReference type="ChEBI" id="CHEBI:30616"/>
    </ligand>
</feature>
<organism>
    <name type="scientific">Hahella chejuensis (strain KCTC 2396)</name>
    <dbReference type="NCBI Taxonomy" id="349521"/>
    <lineage>
        <taxon>Bacteria</taxon>
        <taxon>Pseudomonadati</taxon>
        <taxon>Pseudomonadota</taxon>
        <taxon>Gammaproteobacteria</taxon>
        <taxon>Oceanospirillales</taxon>
        <taxon>Hahellaceae</taxon>
        <taxon>Hahella</taxon>
    </lineage>
</organism>
<evidence type="ECO:0000255" key="1">
    <source>
        <dbReference type="HAMAP-Rule" id="MF_01726"/>
    </source>
</evidence>
<proteinExistence type="inferred from homology"/>